<keyword id="KW-0479">Metal-binding</keyword>
<keyword id="KW-0687">Ribonucleoprotein</keyword>
<keyword id="KW-0689">Ribosomal protein</keyword>
<keyword id="KW-0694">RNA-binding</keyword>
<keyword id="KW-0699">rRNA-binding</keyword>
<keyword id="KW-0862">Zinc</keyword>
<reference key="1">
    <citation type="submission" date="2008-10" db="EMBL/GenBank/DDBJ databases">
        <title>Genome sequence of Ureaplasma urealyticum serovar 10 ATCC-33699.</title>
        <authorList>
            <person name="Shrivastava S."/>
            <person name="Methe B.A."/>
            <person name="Glass J."/>
            <person name="White K."/>
            <person name="Duffy L.B."/>
        </authorList>
    </citation>
    <scope>NUCLEOTIDE SEQUENCE [LARGE SCALE GENOMIC DNA]</scope>
    <source>
        <strain>ATCC 33699 / Western</strain>
    </source>
</reference>
<accession>B5ZB53</accession>
<protein>
    <recommendedName>
        <fullName evidence="1">Small ribosomal subunit protein uS14</fullName>
    </recommendedName>
    <alternativeName>
        <fullName evidence="2">30S ribosomal protein S14 type Z</fullName>
    </alternativeName>
</protein>
<name>RS14Z_UREU1</name>
<sequence>MAKKSLIAKQKKHQKFAVREYTRCVRCGRPHAVNRKFGVCRLCFRDLAYAGAIPGIKKASW</sequence>
<comment type="function">
    <text evidence="1">Binds 16S rRNA, required for the assembly of 30S particles and may also be responsible for determining the conformation of the 16S rRNA at the A site.</text>
</comment>
<comment type="cofactor">
    <cofactor evidence="1">
        <name>Zn(2+)</name>
        <dbReference type="ChEBI" id="CHEBI:29105"/>
    </cofactor>
    <text evidence="1">Binds 1 zinc ion per subunit.</text>
</comment>
<comment type="subunit">
    <text evidence="1">Part of the 30S ribosomal subunit. Contacts proteins S3 and S10.</text>
</comment>
<comment type="similarity">
    <text evidence="1">Belongs to the universal ribosomal protein uS14 family. Zinc-binding uS14 subfamily.</text>
</comment>
<proteinExistence type="inferred from homology"/>
<gene>
    <name evidence="1" type="primary">rpsZ</name>
    <name evidence="1" type="synonym">rpsN</name>
    <name type="ordered locus">UUR10_0239</name>
</gene>
<evidence type="ECO:0000255" key="1">
    <source>
        <dbReference type="HAMAP-Rule" id="MF_01364"/>
    </source>
</evidence>
<evidence type="ECO:0000305" key="2"/>
<feature type="chain" id="PRO_1000143928" description="Small ribosomal subunit protein uS14">
    <location>
        <begin position="1"/>
        <end position="61"/>
    </location>
</feature>
<feature type="binding site" evidence="1">
    <location>
        <position position="24"/>
    </location>
    <ligand>
        <name>Zn(2+)</name>
        <dbReference type="ChEBI" id="CHEBI:29105"/>
    </ligand>
</feature>
<feature type="binding site" evidence="1">
    <location>
        <position position="27"/>
    </location>
    <ligand>
        <name>Zn(2+)</name>
        <dbReference type="ChEBI" id="CHEBI:29105"/>
    </ligand>
</feature>
<feature type="binding site" evidence="1">
    <location>
        <position position="40"/>
    </location>
    <ligand>
        <name>Zn(2+)</name>
        <dbReference type="ChEBI" id="CHEBI:29105"/>
    </ligand>
</feature>
<feature type="binding site" evidence="1">
    <location>
        <position position="43"/>
    </location>
    <ligand>
        <name>Zn(2+)</name>
        <dbReference type="ChEBI" id="CHEBI:29105"/>
    </ligand>
</feature>
<organism>
    <name type="scientific">Ureaplasma urealyticum serovar 10 (strain ATCC 33699 / Western)</name>
    <dbReference type="NCBI Taxonomy" id="565575"/>
    <lineage>
        <taxon>Bacteria</taxon>
        <taxon>Bacillati</taxon>
        <taxon>Mycoplasmatota</taxon>
        <taxon>Mycoplasmoidales</taxon>
        <taxon>Mycoplasmoidaceae</taxon>
        <taxon>Ureaplasma</taxon>
    </lineage>
</organism>
<dbReference type="EMBL" id="CP001184">
    <property type="protein sequence ID" value="ACI59720.1"/>
    <property type="molecule type" value="Genomic_DNA"/>
</dbReference>
<dbReference type="RefSeq" id="WP_004026507.1">
    <property type="nucleotide sequence ID" value="NC_011374.1"/>
</dbReference>
<dbReference type="SMR" id="B5ZB53"/>
<dbReference type="STRING" id="565575.UUR10_0239"/>
<dbReference type="KEGG" id="uue:UUR10_0239"/>
<dbReference type="eggNOG" id="COG0199">
    <property type="taxonomic scope" value="Bacteria"/>
</dbReference>
<dbReference type="HOGENOM" id="CLU_139869_3_0_14"/>
<dbReference type="OrthoDB" id="9810484at2"/>
<dbReference type="Proteomes" id="UP000002018">
    <property type="component" value="Chromosome"/>
</dbReference>
<dbReference type="GO" id="GO:0005737">
    <property type="term" value="C:cytoplasm"/>
    <property type="evidence" value="ECO:0007669"/>
    <property type="project" value="UniProtKB-ARBA"/>
</dbReference>
<dbReference type="GO" id="GO:0015935">
    <property type="term" value="C:small ribosomal subunit"/>
    <property type="evidence" value="ECO:0007669"/>
    <property type="project" value="TreeGrafter"/>
</dbReference>
<dbReference type="GO" id="GO:0019843">
    <property type="term" value="F:rRNA binding"/>
    <property type="evidence" value="ECO:0007669"/>
    <property type="project" value="UniProtKB-UniRule"/>
</dbReference>
<dbReference type="GO" id="GO:0003735">
    <property type="term" value="F:structural constituent of ribosome"/>
    <property type="evidence" value="ECO:0007669"/>
    <property type="project" value="InterPro"/>
</dbReference>
<dbReference type="GO" id="GO:0008270">
    <property type="term" value="F:zinc ion binding"/>
    <property type="evidence" value="ECO:0007669"/>
    <property type="project" value="UniProtKB-UniRule"/>
</dbReference>
<dbReference type="GO" id="GO:0006412">
    <property type="term" value="P:translation"/>
    <property type="evidence" value="ECO:0007669"/>
    <property type="project" value="UniProtKB-UniRule"/>
</dbReference>
<dbReference type="FunFam" id="4.10.830.10:FF:000001">
    <property type="entry name" value="30S ribosomal protein S14 type Z"/>
    <property type="match status" value="1"/>
</dbReference>
<dbReference type="Gene3D" id="4.10.830.10">
    <property type="entry name" value="30s Ribosomal Protein S14, Chain N"/>
    <property type="match status" value="1"/>
</dbReference>
<dbReference type="HAMAP" id="MF_01364_B">
    <property type="entry name" value="Ribosomal_uS14_2_B"/>
    <property type="match status" value="1"/>
</dbReference>
<dbReference type="InterPro" id="IPR001209">
    <property type="entry name" value="Ribosomal_uS14"/>
</dbReference>
<dbReference type="InterPro" id="IPR023053">
    <property type="entry name" value="Ribosomal_uS14_bact"/>
</dbReference>
<dbReference type="InterPro" id="IPR018271">
    <property type="entry name" value="Ribosomal_uS14_CS"/>
</dbReference>
<dbReference type="InterPro" id="IPR043140">
    <property type="entry name" value="Ribosomal_uS14_sf"/>
</dbReference>
<dbReference type="NCBIfam" id="NF005974">
    <property type="entry name" value="PRK08061.1"/>
    <property type="match status" value="1"/>
</dbReference>
<dbReference type="PANTHER" id="PTHR19836">
    <property type="entry name" value="30S RIBOSOMAL PROTEIN S14"/>
    <property type="match status" value="1"/>
</dbReference>
<dbReference type="PANTHER" id="PTHR19836:SF19">
    <property type="entry name" value="SMALL RIBOSOMAL SUBUNIT PROTEIN US14M"/>
    <property type="match status" value="1"/>
</dbReference>
<dbReference type="Pfam" id="PF00253">
    <property type="entry name" value="Ribosomal_S14"/>
    <property type="match status" value="1"/>
</dbReference>
<dbReference type="SUPFAM" id="SSF57716">
    <property type="entry name" value="Glucocorticoid receptor-like (DNA-binding domain)"/>
    <property type="match status" value="1"/>
</dbReference>
<dbReference type="PROSITE" id="PS00527">
    <property type="entry name" value="RIBOSOMAL_S14"/>
    <property type="match status" value="1"/>
</dbReference>